<reference key="1">
    <citation type="journal article" date="2015" name="Genome Announc.">
        <title>Complete genome sequence of Anaeromyxobacter sp. Fw109-5, an anaerobic, metal-reducing bacterium isolated from a contaminated subsurface environment.</title>
        <authorList>
            <person name="Hwang C."/>
            <person name="Copeland A."/>
            <person name="Lucas S."/>
            <person name="Lapidus A."/>
            <person name="Barry K."/>
            <person name="Glavina Del Rio T."/>
            <person name="Dalin E."/>
            <person name="Tice H."/>
            <person name="Pitluck S."/>
            <person name="Sims D."/>
            <person name="Brettin T."/>
            <person name="Bruce D.C."/>
            <person name="Detter J.C."/>
            <person name="Han C.S."/>
            <person name="Schmutz J."/>
            <person name="Larimer F.W."/>
            <person name="Land M.L."/>
            <person name="Hauser L.J."/>
            <person name="Kyrpides N."/>
            <person name="Lykidis A."/>
            <person name="Richardson P."/>
            <person name="Belieav A."/>
            <person name="Sanford R.A."/>
            <person name="Loeffler F.E."/>
            <person name="Fields M.W."/>
        </authorList>
    </citation>
    <scope>NUCLEOTIDE SEQUENCE [LARGE SCALE GENOMIC DNA]</scope>
    <source>
        <strain>Fw109-5</strain>
    </source>
</reference>
<organism>
    <name type="scientific">Anaeromyxobacter sp. (strain Fw109-5)</name>
    <dbReference type="NCBI Taxonomy" id="404589"/>
    <lineage>
        <taxon>Bacteria</taxon>
        <taxon>Pseudomonadati</taxon>
        <taxon>Myxococcota</taxon>
        <taxon>Myxococcia</taxon>
        <taxon>Myxococcales</taxon>
        <taxon>Cystobacterineae</taxon>
        <taxon>Anaeromyxobacteraceae</taxon>
        <taxon>Anaeromyxobacter</taxon>
    </lineage>
</organism>
<name>KAD_ANADF</name>
<proteinExistence type="inferred from homology"/>
<evidence type="ECO:0000255" key="1">
    <source>
        <dbReference type="HAMAP-Rule" id="MF_00235"/>
    </source>
</evidence>
<accession>A7HBN9</accession>
<gene>
    <name evidence="1" type="primary">adk</name>
    <name type="ordered locus">Anae109_1932</name>
</gene>
<sequence length="214" mass="23048">MILILLGPPGAGKGTQAKLLAAEYGVPHISTGDMFRDHKARGTELGKTVQAIMDAGGLVTDDITNEMVKDRLSRPDVAKGFILDGYPRTSAQAEYLDGLLASAGRAISRVLSYEVAEEAVVERISGRRSCPKCGAVYHVSANPPRRMGYCDRDDAGLVQRDDDKPENVKKRMAEYAAKTEPLKRFYSARGLLATVEGIGTPEGILAVTKRVLAS</sequence>
<dbReference type="EC" id="2.7.4.3" evidence="1"/>
<dbReference type="EMBL" id="CP000769">
    <property type="protein sequence ID" value="ABS26135.1"/>
    <property type="molecule type" value="Genomic_DNA"/>
</dbReference>
<dbReference type="RefSeq" id="WP_012096714.1">
    <property type="nucleotide sequence ID" value="NC_009675.1"/>
</dbReference>
<dbReference type="SMR" id="A7HBN9"/>
<dbReference type="STRING" id="404589.Anae109_1932"/>
<dbReference type="KEGG" id="afw:Anae109_1932"/>
<dbReference type="eggNOG" id="COG0563">
    <property type="taxonomic scope" value="Bacteria"/>
</dbReference>
<dbReference type="HOGENOM" id="CLU_032354_1_2_7"/>
<dbReference type="OrthoDB" id="9805030at2"/>
<dbReference type="UniPathway" id="UPA00588">
    <property type="reaction ID" value="UER00649"/>
</dbReference>
<dbReference type="Proteomes" id="UP000006382">
    <property type="component" value="Chromosome"/>
</dbReference>
<dbReference type="GO" id="GO:0005737">
    <property type="term" value="C:cytoplasm"/>
    <property type="evidence" value="ECO:0007669"/>
    <property type="project" value="UniProtKB-SubCell"/>
</dbReference>
<dbReference type="GO" id="GO:0004017">
    <property type="term" value="F:adenylate kinase activity"/>
    <property type="evidence" value="ECO:0007669"/>
    <property type="project" value="UniProtKB-UniRule"/>
</dbReference>
<dbReference type="GO" id="GO:0005524">
    <property type="term" value="F:ATP binding"/>
    <property type="evidence" value="ECO:0007669"/>
    <property type="project" value="UniProtKB-UniRule"/>
</dbReference>
<dbReference type="GO" id="GO:0008270">
    <property type="term" value="F:zinc ion binding"/>
    <property type="evidence" value="ECO:0007669"/>
    <property type="project" value="UniProtKB-UniRule"/>
</dbReference>
<dbReference type="GO" id="GO:0044209">
    <property type="term" value="P:AMP salvage"/>
    <property type="evidence" value="ECO:0007669"/>
    <property type="project" value="UniProtKB-UniRule"/>
</dbReference>
<dbReference type="CDD" id="cd01428">
    <property type="entry name" value="ADK"/>
    <property type="match status" value="1"/>
</dbReference>
<dbReference type="FunFam" id="3.40.50.300:FF:000106">
    <property type="entry name" value="Adenylate kinase mitochondrial"/>
    <property type="match status" value="1"/>
</dbReference>
<dbReference type="Gene3D" id="3.40.50.300">
    <property type="entry name" value="P-loop containing nucleotide triphosphate hydrolases"/>
    <property type="match status" value="1"/>
</dbReference>
<dbReference type="HAMAP" id="MF_00235">
    <property type="entry name" value="Adenylate_kinase_Adk"/>
    <property type="match status" value="1"/>
</dbReference>
<dbReference type="InterPro" id="IPR006259">
    <property type="entry name" value="Adenyl_kin_sub"/>
</dbReference>
<dbReference type="InterPro" id="IPR000850">
    <property type="entry name" value="Adenylat/UMP-CMP_kin"/>
</dbReference>
<dbReference type="InterPro" id="IPR033690">
    <property type="entry name" value="Adenylat_kinase_CS"/>
</dbReference>
<dbReference type="InterPro" id="IPR007862">
    <property type="entry name" value="Adenylate_kinase_lid-dom"/>
</dbReference>
<dbReference type="InterPro" id="IPR027417">
    <property type="entry name" value="P-loop_NTPase"/>
</dbReference>
<dbReference type="NCBIfam" id="TIGR01351">
    <property type="entry name" value="adk"/>
    <property type="match status" value="1"/>
</dbReference>
<dbReference type="NCBIfam" id="NF001380">
    <property type="entry name" value="PRK00279.1-2"/>
    <property type="match status" value="1"/>
</dbReference>
<dbReference type="NCBIfam" id="NF001381">
    <property type="entry name" value="PRK00279.1-3"/>
    <property type="match status" value="1"/>
</dbReference>
<dbReference type="NCBIfam" id="NF011100">
    <property type="entry name" value="PRK14527.1"/>
    <property type="match status" value="1"/>
</dbReference>
<dbReference type="PANTHER" id="PTHR23359">
    <property type="entry name" value="NUCLEOTIDE KINASE"/>
    <property type="match status" value="1"/>
</dbReference>
<dbReference type="Pfam" id="PF00406">
    <property type="entry name" value="ADK"/>
    <property type="match status" value="1"/>
</dbReference>
<dbReference type="Pfam" id="PF05191">
    <property type="entry name" value="ADK_lid"/>
    <property type="match status" value="1"/>
</dbReference>
<dbReference type="PRINTS" id="PR00094">
    <property type="entry name" value="ADENYLTKNASE"/>
</dbReference>
<dbReference type="SUPFAM" id="SSF52540">
    <property type="entry name" value="P-loop containing nucleoside triphosphate hydrolases"/>
    <property type="match status" value="1"/>
</dbReference>
<dbReference type="PROSITE" id="PS00113">
    <property type="entry name" value="ADENYLATE_KINASE"/>
    <property type="match status" value="1"/>
</dbReference>
<keyword id="KW-0067">ATP-binding</keyword>
<keyword id="KW-0963">Cytoplasm</keyword>
<keyword id="KW-0418">Kinase</keyword>
<keyword id="KW-0479">Metal-binding</keyword>
<keyword id="KW-0545">Nucleotide biosynthesis</keyword>
<keyword id="KW-0547">Nucleotide-binding</keyword>
<keyword id="KW-1185">Reference proteome</keyword>
<keyword id="KW-0808">Transferase</keyword>
<keyword id="KW-0862">Zinc</keyword>
<protein>
    <recommendedName>
        <fullName evidence="1">Adenylate kinase</fullName>
        <shortName evidence="1">AK</shortName>
        <ecNumber evidence="1">2.7.4.3</ecNumber>
    </recommendedName>
    <alternativeName>
        <fullName evidence="1">ATP-AMP transphosphorylase</fullName>
    </alternativeName>
    <alternativeName>
        <fullName evidence="1">ATP:AMP phosphotransferase</fullName>
    </alternativeName>
    <alternativeName>
        <fullName evidence="1">Adenylate monophosphate kinase</fullName>
    </alternativeName>
</protein>
<feature type="chain" id="PRO_1000021708" description="Adenylate kinase">
    <location>
        <begin position="1"/>
        <end position="214"/>
    </location>
</feature>
<feature type="region of interest" description="NMP" evidence="1">
    <location>
        <begin position="30"/>
        <end position="59"/>
    </location>
</feature>
<feature type="region of interest" description="LID" evidence="1">
    <location>
        <begin position="126"/>
        <end position="163"/>
    </location>
</feature>
<feature type="binding site" evidence="1">
    <location>
        <begin position="10"/>
        <end position="15"/>
    </location>
    <ligand>
        <name>ATP</name>
        <dbReference type="ChEBI" id="CHEBI:30616"/>
    </ligand>
</feature>
<feature type="binding site" evidence="1">
    <location>
        <position position="31"/>
    </location>
    <ligand>
        <name>AMP</name>
        <dbReference type="ChEBI" id="CHEBI:456215"/>
    </ligand>
</feature>
<feature type="binding site" evidence="1">
    <location>
        <position position="36"/>
    </location>
    <ligand>
        <name>AMP</name>
        <dbReference type="ChEBI" id="CHEBI:456215"/>
    </ligand>
</feature>
<feature type="binding site" evidence="1">
    <location>
        <begin position="57"/>
        <end position="59"/>
    </location>
    <ligand>
        <name>AMP</name>
        <dbReference type="ChEBI" id="CHEBI:456215"/>
    </ligand>
</feature>
<feature type="binding site" evidence="1">
    <location>
        <begin position="85"/>
        <end position="88"/>
    </location>
    <ligand>
        <name>AMP</name>
        <dbReference type="ChEBI" id="CHEBI:456215"/>
    </ligand>
</feature>
<feature type="binding site" evidence="1">
    <location>
        <position position="92"/>
    </location>
    <ligand>
        <name>AMP</name>
        <dbReference type="ChEBI" id="CHEBI:456215"/>
    </ligand>
</feature>
<feature type="binding site" evidence="1">
    <location>
        <position position="127"/>
    </location>
    <ligand>
        <name>ATP</name>
        <dbReference type="ChEBI" id="CHEBI:30616"/>
    </ligand>
</feature>
<feature type="binding site" evidence="1">
    <location>
        <position position="130"/>
    </location>
    <ligand>
        <name>Zn(2+)</name>
        <dbReference type="ChEBI" id="CHEBI:29105"/>
        <note>structural</note>
    </ligand>
</feature>
<feature type="binding site" evidence="1">
    <location>
        <position position="133"/>
    </location>
    <ligand>
        <name>Zn(2+)</name>
        <dbReference type="ChEBI" id="CHEBI:29105"/>
        <note>structural</note>
    </ligand>
</feature>
<feature type="binding site" evidence="1">
    <location>
        <begin position="136"/>
        <end position="137"/>
    </location>
    <ligand>
        <name>ATP</name>
        <dbReference type="ChEBI" id="CHEBI:30616"/>
    </ligand>
</feature>
<feature type="binding site" evidence="1">
    <location>
        <position position="150"/>
    </location>
    <ligand>
        <name>Zn(2+)</name>
        <dbReference type="ChEBI" id="CHEBI:29105"/>
        <note>structural</note>
    </ligand>
</feature>
<feature type="binding site" evidence="1">
    <location>
        <position position="153"/>
    </location>
    <ligand>
        <name>Zn(2+)</name>
        <dbReference type="ChEBI" id="CHEBI:29105"/>
        <note>structural</note>
    </ligand>
</feature>
<feature type="binding site" evidence="1">
    <location>
        <position position="160"/>
    </location>
    <ligand>
        <name>AMP</name>
        <dbReference type="ChEBI" id="CHEBI:456215"/>
    </ligand>
</feature>
<feature type="binding site" evidence="1">
    <location>
        <position position="171"/>
    </location>
    <ligand>
        <name>AMP</name>
        <dbReference type="ChEBI" id="CHEBI:456215"/>
    </ligand>
</feature>
<feature type="binding site" evidence="1">
    <location>
        <position position="199"/>
    </location>
    <ligand>
        <name>ATP</name>
        <dbReference type="ChEBI" id="CHEBI:30616"/>
    </ligand>
</feature>
<comment type="function">
    <text evidence="1">Catalyzes the reversible transfer of the terminal phosphate group between ATP and AMP. Plays an important role in cellular energy homeostasis and in adenine nucleotide metabolism.</text>
</comment>
<comment type="catalytic activity">
    <reaction evidence="1">
        <text>AMP + ATP = 2 ADP</text>
        <dbReference type="Rhea" id="RHEA:12973"/>
        <dbReference type="ChEBI" id="CHEBI:30616"/>
        <dbReference type="ChEBI" id="CHEBI:456215"/>
        <dbReference type="ChEBI" id="CHEBI:456216"/>
        <dbReference type="EC" id="2.7.4.3"/>
    </reaction>
</comment>
<comment type="pathway">
    <text evidence="1">Purine metabolism; AMP biosynthesis via salvage pathway; AMP from ADP: step 1/1.</text>
</comment>
<comment type="subunit">
    <text evidence="1">Monomer.</text>
</comment>
<comment type="subcellular location">
    <subcellularLocation>
        <location evidence="1">Cytoplasm</location>
    </subcellularLocation>
</comment>
<comment type="domain">
    <text evidence="1">Consists of three domains, a large central CORE domain and two small peripheral domains, NMPbind and LID, which undergo movements during catalysis. The LID domain closes over the site of phosphoryl transfer upon ATP binding. Assembling and dissambling the active center during each catalytic cycle provides an effective means to prevent ATP hydrolysis. Some bacteria have evolved a zinc-coordinating structure that stabilizes the LID domain.</text>
</comment>
<comment type="similarity">
    <text evidence="1">Belongs to the adenylate kinase family.</text>
</comment>